<keyword id="KW-1185">Reference proteome</keyword>
<keyword id="KW-0808">Transferase</keyword>
<protein>
    <recommendedName>
        <fullName>Probable succinyl-CoA:3-ketoacid coenzyme A transferase subunit B</fullName>
        <ecNumber>2.8.3.5</ecNumber>
    </recommendedName>
    <alternativeName>
        <fullName>OXCT B</fullName>
    </alternativeName>
    <alternativeName>
        <fullName>Succinyl-CoA:3-oxoacid CoA-transferase</fullName>
    </alternativeName>
</protein>
<comment type="catalytic activity">
    <reaction evidence="2">
        <text>a 3-oxo acid + succinyl-CoA = a 3-oxoacyl-CoA + succinate</text>
        <dbReference type="Rhea" id="RHEA:24564"/>
        <dbReference type="ChEBI" id="CHEBI:30031"/>
        <dbReference type="ChEBI" id="CHEBI:35973"/>
        <dbReference type="ChEBI" id="CHEBI:57292"/>
        <dbReference type="ChEBI" id="CHEBI:90726"/>
        <dbReference type="EC" id="2.8.3.5"/>
    </reaction>
</comment>
<comment type="subunit">
    <text evidence="1">Heterodimer of a subunit A and a subunit B.</text>
</comment>
<comment type="similarity">
    <text evidence="3">Belongs to the 3-oxoacid CoA-transferase subunit B family.</text>
</comment>
<reference key="1">
    <citation type="journal article" date="2002" name="J. Bacteriol.">
        <title>Whole-genome comparison of Mycobacterium tuberculosis clinical and laboratory strains.</title>
        <authorList>
            <person name="Fleischmann R.D."/>
            <person name="Alland D."/>
            <person name="Eisen J.A."/>
            <person name="Carpenter L."/>
            <person name="White O."/>
            <person name="Peterson J.D."/>
            <person name="DeBoy R.T."/>
            <person name="Dodson R.J."/>
            <person name="Gwinn M.L."/>
            <person name="Haft D.H."/>
            <person name="Hickey E.K."/>
            <person name="Kolonay J.F."/>
            <person name="Nelson W.C."/>
            <person name="Umayam L.A."/>
            <person name="Ermolaeva M.D."/>
            <person name="Salzberg S.L."/>
            <person name="Delcher A."/>
            <person name="Utterback T.R."/>
            <person name="Weidman J.F."/>
            <person name="Khouri H.M."/>
            <person name="Gill J."/>
            <person name="Mikula A."/>
            <person name="Bishai W."/>
            <person name="Jacobs W.R. Jr."/>
            <person name="Venter J.C."/>
            <person name="Fraser C.M."/>
        </authorList>
    </citation>
    <scope>NUCLEOTIDE SEQUENCE [LARGE SCALE GENOMIC DNA]</scope>
    <source>
        <strain>CDC 1551 / Oshkosh</strain>
    </source>
</reference>
<proteinExistence type="inferred from homology"/>
<gene>
    <name type="primary">scoB</name>
    <name type="ordered locus">MT2578</name>
</gene>
<accession>P9WPW2</accession>
<accession>L0TCQ5</accession>
<accession>O06166</accession>
<accession>P63650</accession>
<sequence>MSAPGWSRDEMAARVAAEFEDGQYVNLGIGMPTLIPNHIPDGVHVVLHSENGILGVGPYPRREDVDADLINAGKETVTTLPGAAFFSSSTSFGIIRGGHLDVAVLGAMQVSVTGDLANWMIPGKMVKGMGGAMDLVHGARKVIVMMEHTAKDGSPKILERCTLPLTGVGCVDRIVTELAVIDVCADGLHLVQTAPGVSVDEVVAKTQPPLVLRDLATQ</sequence>
<organism>
    <name type="scientific">Mycobacterium tuberculosis (strain CDC 1551 / Oshkosh)</name>
    <dbReference type="NCBI Taxonomy" id="83331"/>
    <lineage>
        <taxon>Bacteria</taxon>
        <taxon>Bacillati</taxon>
        <taxon>Actinomycetota</taxon>
        <taxon>Actinomycetes</taxon>
        <taxon>Mycobacteriales</taxon>
        <taxon>Mycobacteriaceae</taxon>
        <taxon>Mycobacterium</taxon>
        <taxon>Mycobacterium tuberculosis complex</taxon>
    </lineage>
</organism>
<dbReference type="EC" id="2.8.3.5"/>
<dbReference type="EMBL" id="AE000516">
    <property type="protein sequence ID" value="AAK46882.1"/>
    <property type="molecule type" value="Genomic_DNA"/>
</dbReference>
<dbReference type="PIR" id="G70550">
    <property type="entry name" value="G70550"/>
</dbReference>
<dbReference type="RefSeq" id="WP_003412782.1">
    <property type="nucleotide sequence ID" value="NZ_KK341227.1"/>
</dbReference>
<dbReference type="SMR" id="P9WPW2"/>
<dbReference type="KEGG" id="mtc:MT2578"/>
<dbReference type="PATRIC" id="fig|83331.31.peg.2780"/>
<dbReference type="HOGENOM" id="CLU_019942_4_1_11"/>
<dbReference type="Proteomes" id="UP000001020">
    <property type="component" value="Chromosome"/>
</dbReference>
<dbReference type="GO" id="GO:0008260">
    <property type="term" value="F:succinyl-CoA:3-oxo-acid CoA-transferase activity"/>
    <property type="evidence" value="ECO:0007669"/>
    <property type="project" value="UniProtKB-EC"/>
</dbReference>
<dbReference type="FunFam" id="3.40.1080.10:FF:000001">
    <property type="entry name" value="Succinyl-coa:3-ketoacid-coenzyme a transferase subunit b"/>
    <property type="match status" value="1"/>
</dbReference>
<dbReference type="Gene3D" id="3.40.1080.10">
    <property type="entry name" value="Glutaconate Coenzyme A-transferase"/>
    <property type="match status" value="1"/>
</dbReference>
<dbReference type="InterPro" id="IPR012791">
    <property type="entry name" value="3-oxoacid_CoA-transf_B"/>
</dbReference>
<dbReference type="InterPro" id="IPR004165">
    <property type="entry name" value="CoA_trans_fam_I"/>
</dbReference>
<dbReference type="InterPro" id="IPR004164">
    <property type="entry name" value="CoA_transf_AS"/>
</dbReference>
<dbReference type="InterPro" id="IPR037171">
    <property type="entry name" value="NagB/RpiA_transferase-like"/>
</dbReference>
<dbReference type="NCBIfam" id="TIGR02428">
    <property type="entry name" value="pcaJ_scoB_fam"/>
    <property type="match status" value="1"/>
</dbReference>
<dbReference type="PANTHER" id="PTHR13707">
    <property type="entry name" value="KETOACID-COENZYME A TRANSFERASE"/>
    <property type="match status" value="1"/>
</dbReference>
<dbReference type="PANTHER" id="PTHR13707:SF57">
    <property type="entry name" value="SUCCINYL-COA:3-KETOACID COENZYME A TRANSFERASE SUBUNIT B-RELATED"/>
    <property type="match status" value="1"/>
</dbReference>
<dbReference type="Pfam" id="PF01144">
    <property type="entry name" value="CoA_trans"/>
    <property type="match status" value="1"/>
</dbReference>
<dbReference type="SMART" id="SM00882">
    <property type="entry name" value="CoA_trans"/>
    <property type="match status" value="1"/>
</dbReference>
<dbReference type="SUPFAM" id="SSF100950">
    <property type="entry name" value="NagB/RpiA/CoA transferase-like"/>
    <property type="match status" value="1"/>
</dbReference>
<dbReference type="PROSITE" id="PS01274">
    <property type="entry name" value="COA_TRANSF_2"/>
    <property type="match status" value="1"/>
</dbReference>
<evidence type="ECO:0000250" key="1"/>
<evidence type="ECO:0000255" key="2">
    <source>
        <dbReference type="PROSITE-ProRule" id="PRU10034"/>
    </source>
</evidence>
<evidence type="ECO:0000305" key="3"/>
<feature type="chain" id="PRO_0000426882" description="Probable succinyl-CoA:3-ketoacid coenzyme A transferase subunit B">
    <location>
        <begin position="1"/>
        <end position="218"/>
    </location>
</feature>
<feature type="active site" evidence="2">
    <location>
        <position position="50"/>
    </location>
</feature>
<name>SCOB_MYCTO</name>